<comment type="function">
    <text evidence="1">This protein may be involved in virus assembly. Essential for virus function.</text>
</comment>
<evidence type="ECO:0000269" key="1">
    <source>
    </source>
</evidence>
<accession>P20205</accession>
<reference key="1">
    <citation type="journal article" date="1991" name="Virology">
        <title>Complete nucleotide sequence of the virus SSV1 of the archaebacterium Sulfolobus shibatae.</title>
        <authorList>
            <person name="Palm P."/>
            <person name="Schleper C."/>
            <person name="Grampp B."/>
            <person name="Yeats S."/>
            <person name="McWilliam P."/>
            <person name="Reiter W.-D."/>
            <person name="Zillig W."/>
        </authorList>
    </citation>
    <scope>NUCLEOTIDE SEQUENCE [GENOMIC DNA]</scope>
</reference>
<reference key="2">
    <citation type="journal article" date="1999" name="Genetics">
        <title>Genetic requirements for the function of the archaeal virus SSV1 in Sulfolobus solfataricus: construction and testing of viral shuttle vectors.</title>
        <authorList>
            <person name="Stedman K.M."/>
            <person name="Schleper C."/>
            <person name="Rumpf E."/>
            <person name="Zillig W."/>
        </authorList>
    </citation>
    <scope>FUNCTION</scope>
</reference>
<proteinExistence type="predicted"/>
<feature type="chain" id="PRO_0000223033" description="Uncharacterized protein B-78">
    <location>
        <begin position="1"/>
        <end position="78"/>
    </location>
</feature>
<sequence length="78" mass="8157">MTDAISLALQTGLGPVVGVIIILAMMGLTYKIAGKIPAIITGIASAFVLMFMDFLPLFWGIAIIFGLIAGMVVTRDGD</sequence>
<protein>
    <recommendedName>
        <fullName>Uncharacterized protein B-78</fullName>
    </recommendedName>
</protein>
<keyword id="KW-1185">Reference proteome</keyword>
<organism>
    <name type="scientific">Sulfolobus spindle-shape virus 1</name>
    <name type="common">SSV1</name>
    <dbReference type="NCBI Taxonomy" id="244589"/>
    <lineage>
        <taxon>Viruses</taxon>
        <taxon>Viruses incertae sedis</taxon>
        <taxon>Fuselloviridae</taxon>
        <taxon>Alphafusellovirus</taxon>
    </lineage>
</organism>
<gene>
    <name type="ORF">b78</name>
</gene>
<organismHost>
    <name type="scientific">Saccharolobus solfataricus</name>
    <name type="common">Sulfolobus solfataricus</name>
    <dbReference type="NCBI Taxonomy" id="2287"/>
</organismHost>
<name>B78_SSV1</name>
<dbReference type="EMBL" id="X07234">
    <property type="protein sequence ID" value="CAA30201.1"/>
    <property type="molecule type" value="Genomic_DNA"/>
</dbReference>
<dbReference type="PIR" id="S03233">
    <property type="entry name" value="S03233"/>
</dbReference>
<dbReference type="RefSeq" id="NP_039799.1">
    <property type="nucleotide sequence ID" value="NC_001338.1"/>
</dbReference>
<dbReference type="SMR" id="P20205"/>
<dbReference type="KEGG" id="vg:2559651"/>
<dbReference type="OrthoDB" id="24417at10239"/>
<dbReference type="Proteomes" id="UP000000854">
    <property type="component" value="Genome"/>
</dbReference>
<dbReference type="InterPro" id="IPR020142">
    <property type="entry name" value="DUF5489"/>
</dbReference>
<dbReference type="Pfam" id="PF17592">
    <property type="entry name" value="DUF5489"/>
    <property type="match status" value="1"/>
</dbReference>